<name>PSA_SACI6</name>
<comment type="function">
    <text evidence="1">Component of the proteasome core, a large protease complex with broad specificity involved in protein degradation.</text>
</comment>
<comment type="activity regulation">
    <text evidence="1">The formation of the proteasomal ATPase PAN-20S proteasome complex, via the docking of the C-termini of PAN into the intersubunit pockets in the alpha-rings, triggers opening of the gate for substrate entry. Interconversion between the open-gate and close-gate conformations leads to a dynamic regulation of the 20S proteasome proteolysis activity.</text>
</comment>
<comment type="subunit">
    <text evidence="1">The 20S proteasome core is composed of 14 alpha and 14 beta subunits that assemble into four stacked heptameric rings, resulting in a barrel-shaped structure. The two inner rings, each composed of seven catalytic beta subunits, are sandwiched by two outer rings, each composed of seven alpha subunits. The catalytic chamber with the active sites is on the inside of the barrel. Has a gated structure, the ends of the cylinder being occluded by the N-termini of the alpha-subunits. Is capped at one or both ends by the proteasome regulatory ATPase, PAN.</text>
</comment>
<comment type="subcellular location">
    <subcellularLocation>
        <location evidence="1">Cytoplasm</location>
    </subcellularLocation>
</comment>
<comment type="similarity">
    <text evidence="1">Belongs to the peptidase T1A family.</text>
</comment>
<accession>C4KHD9</accession>
<feature type="chain" id="PRO_1000204860" description="Proteasome subunit alpha">
    <location>
        <begin position="1"/>
        <end position="241"/>
    </location>
</feature>
<reference key="1">
    <citation type="journal article" date="2009" name="Proc. Natl. Acad. Sci. U.S.A.">
        <title>Biogeography of the Sulfolobus islandicus pan-genome.</title>
        <authorList>
            <person name="Reno M.L."/>
            <person name="Held N.L."/>
            <person name="Fields C.J."/>
            <person name="Burke P.V."/>
            <person name="Whitaker R.J."/>
        </authorList>
    </citation>
    <scope>NUCLEOTIDE SEQUENCE [LARGE SCALE GENOMIC DNA]</scope>
    <source>
        <strain>M.16.4 / Kamchatka #3</strain>
    </source>
</reference>
<protein>
    <recommendedName>
        <fullName evidence="1">Proteasome subunit alpha</fullName>
    </recommendedName>
    <alternativeName>
        <fullName evidence="1">20S proteasome alpha subunit</fullName>
    </alternativeName>
    <alternativeName>
        <fullName evidence="1">Proteasome core protein PsmA</fullName>
    </alternativeName>
</protein>
<organism>
    <name type="scientific">Saccharolobus islandicus (strain M.16.4 / Kamchatka #3)</name>
    <name type="common">Sulfolobus islandicus</name>
    <dbReference type="NCBI Taxonomy" id="426118"/>
    <lineage>
        <taxon>Archaea</taxon>
        <taxon>Thermoproteota</taxon>
        <taxon>Thermoprotei</taxon>
        <taxon>Sulfolobales</taxon>
        <taxon>Sulfolobaceae</taxon>
        <taxon>Saccharolobus</taxon>
    </lineage>
</organism>
<keyword id="KW-0963">Cytoplasm</keyword>
<keyword id="KW-0647">Proteasome</keyword>
<gene>
    <name evidence="1" type="primary">psmA</name>
    <name type="ordered locus">M164_1397</name>
</gene>
<dbReference type="EMBL" id="CP001402">
    <property type="protein sequence ID" value="ACR42003.1"/>
    <property type="molecule type" value="Genomic_DNA"/>
</dbReference>
<dbReference type="RefSeq" id="WP_012711401.1">
    <property type="nucleotide sequence ID" value="NC_012726.1"/>
</dbReference>
<dbReference type="SMR" id="C4KHD9"/>
<dbReference type="GeneID" id="84061723"/>
<dbReference type="KEGG" id="sid:M164_1397"/>
<dbReference type="HOGENOM" id="CLU_035750_4_1_2"/>
<dbReference type="Proteomes" id="UP000001479">
    <property type="component" value="Chromosome"/>
</dbReference>
<dbReference type="GO" id="GO:0005737">
    <property type="term" value="C:cytoplasm"/>
    <property type="evidence" value="ECO:0007669"/>
    <property type="project" value="UniProtKB-SubCell"/>
</dbReference>
<dbReference type="GO" id="GO:0019773">
    <property type="term" value="C:proteasome core complex, alpha-subunit complex"/>
    <property type="evidence" value="ECO:0000250"/>
    <property type="project" value="UniProtKB"/>
</dbReference>
<dbReference type="GO" id="GO:0004298">
    <property type="term" value="F:threonine-type endopeptidase activity"/>
    <property type="evidence" value="ECO:0007669"/>
    <property type="project" value="InterPro"/>
</dbReference>
<dbReference type="GO" id="GO:0010498">
    <property type="term" value="P:proteasomal protein catabolic process"/>
    <property type="evidence" value="ECO:0007669"/>
    <property type="project" value="UniProtKB-UniRule"/>
</dbReference>
<dbReference type="GO" id="GO:0006511">
    <property type="term" value="P:ubiquitin-dependent protein catabolic process"/>
    <property type="evidence" value="ECO:0007669"/>
    <property type="project" value="InterPro"/>
</dbReference>
<dbReference type="CDD" id="cd03756">
    <property type="entry name" value="proteasome_alpha_archeal"/>
    <property type="match status" value="1"/>
</dbReference>
<dbReference type="FunFam" id="3.60.20.10:FF:000004">
    <property type="entry name" value="Proteasome subunit alpha type-4"/>
    <property type="match status" value="1"/>
</dbReference>
<dbReference type="Gene3D" id="3.60.20.10">
    <property type="entry name" value="Glutamine Phosphoribosylpyrophosphate, subunit 1, domain 1"/>
    <property type="match status" value="1"/>
</dbReference>
<dbReference type="HAMAP" id="MF_00289_A">
    <property type="entry name" value="Proteasome_A_A"/>
    <property type="match status" value="1"/>
</dbReference>
<dbReference type="InterPro" id="IPR029055">
    <property type="entry name" value="Ntn_hydrolases_N"/>
</dbReference>
<dbReference type="InterPro" id="IPR050115">
    <property type="entry name" value="Proteasome_alpha"/>
</dbReference>
<dbReference type="InterPro" id="IPR023332">
    <property type="entry name" value="Proteasome_alpha-type"/>
</dbReference>
<dbReference type="InterPro" id="IPR019982">
    <property type="entry name" value="Proteasome_asu_arc"/>
</dbReference>
<dbReference type="InterPro" id="IPR000426">
    <property type="entry name" value="Proteasome_asu_N"/>
</dbReference>
<dbReference type="InterPro" id="IPR001353">
    <property type="entry name" value="Proteasome_sua/b"/>
</dbReference>
<dbReference type="NCBIfam" id="TIGR03633">
    <property type="entry name" value="arc_protsome_A"/>
    <property type="match status" value="1"/>
</dbReference>
<dbReference type="NCBIfam" id="NF003075">
    <property type="entry name" value="PRK03996.1"/>
    <property type="match status" value="1"/>
</dbReference>
<dbReference type="PANTHER" id="PTHR11599">
    <property type="entry name" value="PROTEASOME SUBUNIT ALPHA/BETA"/>
    <property type="match status" value="1"/>
</dbReference>
<dbReference type="Pfam" id="PF00227">
    <property type="entry name" value="Proteasome"/>
    <property type="match status" value="1"/>
</dbReference>
<dbReference type="Pfam" id="PF10584">
    <property type="entry name" value="Proteasome_A_N"/>
    <property type="match status" value="1"/>
</dbReference>
<dbReference type="SMART" id="SM00948">
    <property type="entry name" value="Proteasome_A_N"/>
    <property type="match status" value="1"/>
</dbReference>
<dbReference type="SUPFAM" id="SSF56235">
    <property type="entry name" value="N-terminal nucleophile aminohydrolases (Ntn hydrolases)"/>
    <property type="match status" value="1"/>
</dbReference>
<dbReference type="PROSITE" id="PS00388">
    <property type="entry name" value="PROTEASOME_ALPHA_1"/>
    <property type="match status" value="1"/>
</dbReference>
<dbReference type="PROSITE" id="PS51475">
    <property type="entry name" value="PROTEASOME_ALPHA_2"/>
    <property type="match status" value="1"/>
</dbReference>
<proteinExistence type="inferred from homology"/>
<evidence type="ECO:0000255" key="1">
    <source>
        <dbReference type="HAMAP-Rule" id="MF_00289"/>
    </source>
</evidence>
<sequence>MAFGPAAMGYDRAITIFSPDGSLYQVDYAFEAVKKGWTAIGIKSKSGVVIASEKRKAQSLLDVDSIEKVFLIDDHVGCSFAGLASDGRVLIDYARNIALQHRLIYDEPVSIDYLTKSVADVKQMYTQHGGVRPFGVALVIAGIDKSVPKLYMTEPSGQYMPYQAVAIGQGYYTATEFLEKNYKEDLTIEDTILLALKALSATLKPNEKLTPNTVEIGYASTQTGLFLKMTSEDKNMYLQKL</sequence>